<dbReference type="EMBL" id="CP000350">
    <property type="protein sequence ID" value="ABJ77073.1"/>
    <property type="molecule type" value="Genomic_DNA"/>
</dbReference>
<dbReference type="RefSeq" id="WP_011669437.1">
    <property type="nucleotide sequence ID" value="NC_008510.1"/>
</dbReference>
<dbReference type="SMR" id="Q04PU7"/>
<dbReference type="KEGG" id="lbj:LBJ_2650"/>
<dbReference type="HOGENOM" id="CLU_073626_1_0_12"/>
<dbReference type="Proteomes" id="UP000000656">
    <property type="component" value="Chromosome 1"/>
</dbReference>
<dbReference type="GO" id="GO:0022627">
    <property type="term" value="C:cytosolic small ribosomal subunit"/>
    <property type="evidence" value="ECO:0007669"/>
    <property type="project" value="TreeGrafter"/>
</dbReference>
<dbReference type="GO" id="GO:0019843">
    <property type="term" value="F:rRNA binding"/>
    <property type="evidence" value="ECO:0007669"/>
    <property type="project" value="UniProtKB-UniRule"/>
</dbReference>
<dbReference type="GO" id="GO:0003735">
    <property type="term" value="F:structural constituent of ribosome"/>
    <property type="evidence" value="ECO:0007669"/>
    <property type="project" value="InterPro"/>
</dbReference>
<dbReference type="GO" id="GO:0006412">
    <property type="term" value="P:translation"/>
    <property type="evidence" value="ECO:0007669"/>
    <property type="project" value="UniProtKB-UniRule"/>
</dbReference>
<dbReference type="CDD" id="cd00364">
    <property type="entry name" value="Ribosomal_uS17"/>
    <property type="match status" value="1"/>
</dbReference>
<dbReference type="Gene3D" id="2.40.50.140">
    <property type="entry name" value="Nucleic acid-binding proteins"/>
    <property type="match status" value="1"/>
</dbReference>
<dbReference type="HAMAP" id="MF_01345_B">
    <property type="entry name" value="Ribosomal_uS17_B"/>
    <property type="match status" value="1"/>
</dbReference>
<dbReference type="InterPro" id="IPR012340">
    <property type="entry name" value="NA-bd_OB-fold"/>
</dbReference>
<dbReference type="InterPro" id="IPR000266">
    <property type="entry name" value="Ribosomal_uS17"/>
</dbReference>
<dbReference type="InterPro" id="IPR019984">
    <property type="entry name" value="Ribosomal_uS17_bact/chlr"/>
</dbReference>
<dbReference type="InterPro" id="IPR019979">
    <property type="entry name" value="Ribosomal_uS17_CS"/>
</dbReference>
<dbReference type="NCBIfam" id="NF004123">
    <property type="entry name" value="PRK05610.1"/>
    <property type="match status" value="1"/>
</dbReference>
<dbReference type="NCBIfam" id="TIGR03635">
    <property type="entry name" value="uS17_bact"/>
    <property type="match status" value="1"/>
</dbReference>
<dbReference type="PANTHER" id="PTHR10744">
    <property type="entry name" value="40S RIBOSOMAL PROTEIN S11 FAMILY MEMBER"/>
    <property type="match status" value="1"/>
</dbReference>
<dbReference type="PANTHER" id="PTHR10744:SF1">
    <property type="entry name" value="SMALL RIBOSOMAL SUBUNIT PROTEIN US17M"/>
    <property type="match status" value="1"/>
</dbReference>
<dbReference type="Pfam" id="PF00366">
    <property type="entry name" value="Ribosomal_S17"/>
    <property type="match status" value="1"/>
</dbReference>
<dbReference type="PRINTS" id="PR00973">
    <property type="entry name" value="RIBOSOMALS17"/>
</dbReference>
<dbReference type="SUPFAM" id="SSF50249">
    <property type="entry name" value="Nucleic acid-binding proteins"/>
    <property type="match status" value="1"/>
</dbReference>
<dbReference type="PROSITE" id="PS00056">
    <property type="entry name" value="RIBOSOMAL_S17"/>
    <property type="match status" value="1"/>
</dbReference>
<accession>Q04PU7</accession>
<feature type="chain" id="PRO_1000054973" description="Small ribosomal subunit protein uS17">
    <location>
        <begin position="1"/>
        <end position="89"/>
    </location>
</feature>
<reference key="1">
    <citation type="journal article" date="2006" name="Proc. Natl. Acad. Sci. U.S.A.">
        <title>Genome reduction in Leptospira borgpetersenii reflects limited transmission potential.</title>
        <authorList>
            <person name="Bulach D.M."/>
            <person name="Zuerner R.L."/>
            <person name="Wilson P."/>
            <person name="Seemann T."/>
            <person name="McGrath A."/>
            <person name="Cullen P.A."/>
            <person name="Davis J."/>
            <person name="Johnson M."/>
            <person name="Kuczek E."/>
            <person name="Alt D.P."/>
            <person name="Peterson-Burch B."/>
            <person name="Coppel R.L."/>
            <person name="Rood J.I."/>
            <person name="Davies J.K."/>
            <person name="Adler B."/>
        </authorList>
    </citation>
    <scope>NUCLEOTIDE SEQUENCE [LARGE SCALE GENOMIC DNA]</scope>
    <source>
        <strain>JB197</strain>
    </source>
</reference>
<keyword id="KW-0687">Ribonucleoprotein</keyword>
<keyword id="KW-0689">Ribosomal protein</keyword>
<keyword id="KW-0694">RNA-binding</keyword>
<keyword id="KW-0699">rRNA-binding</keyword>
<gene>
    <name evidence="1" type="primary">rpsQ</name>
    <name type="ordered locus">LBJ_2650</name>
</gene>
<name>RS17_LEPBJ</name>
<comment type="function">
    <text evidence="1">One of the primary rRNA binding proteins, it binds specifically to the 5'-end of 16S ribosomal RNA.</text>
</comment>
<comment type="subunit">
    <text evidence="1">Part of the 30S ribosomal subunit.</text>
</comment>
<comment type="similarity">
    <text evidence="1">Belongs to the universal ribosomal protein uS17 family.</text>
</comment>
<organism>
    <name type="scientific">Leptospira borgpetersenii serovar Hardjo-bovis (strain JB197)</name>
    <dbReference type="NCBI Taxonomy" id="355277"/>
    <lineage>
        <taxon>Bacteria</taxon>
        <taxon>Pseudomonadati</taxon>
        <taxon>Spirochaetota</taxon>
        <taxon>Spirochaetia</taxon>
        <taxon>Leptospirales</taxon>
        <taxon>Leptospiraceae</taxon>
        <taxon>Leptospira</taxon>
    </lineage>
</organism>
<protein>
    <recommendedName>
        <fullName evidence="1">Small ribosomal subunit protein uS17</fullName>
    </recommendedName>
    <alternativeName>
        <fullName evidence="2">30S ribosomal protein S17</fullName>
    </alternativeName>
</protein>
<evidence type="ECO:0000255" key="1">
    <source>
        <dbReference type="HAMAP-Rule" id="MF_01345"/>
    </source>
</evidence>
<evidence type="ECO:0000305" key="2"/>
<proteinExistence type="inferred from homology"/>
<sequence>MTVGKQHINKSLLYEGRVVSNSMNKTVVIVVETRKTHPKFKKIVRRSIKIKVHDEKNECTIGDKILAIETRPLSREKRHRLYRIVEKAK</sequence>